<evidence type="ECO:0000255" key="1">
    <source>
        <dbReference type="HAMAP-Rule" id="MF_01693"/>
    </source>
</evidence>
<keyword id="KW-0093">Biotin biosynthesis</keyword>
<keyword id="KW-0663">Pyridoxal phosphate</keyword>
<keyword id="KW-0808">Transferase</keyword>
<gene>
    <name evidence="1" type="primary">bioF</name>
    <name type="ordered locus">ECIAI1_0811</name>
</gene>
<dbReference type="EC" id="2.3.1.47" evidence="1"/>
<dbReference type="EMBL" id="CU928160">
    <property type="protein sequence ID" value="CAQ97676.1"/>
    <property type="molecule type" value="Genomic_DNA"/>
</dbReference>
<dbReference type="RefSeq" id="WP_000118827.1">
    <property type="nucleotide sequence ID" value="NC_011741.1"/>
</dbReference>
<dbReference type="SMR" id="B7M748"/>
<dbReference type="KEGG" id="ecr:ECIAI1_0811"/>
<dbReference type="HOGENOM" id="CLU_015846_11_2_6"/>
<dbReference type="UniPathway" id="UPA00078"/>
<dbReference type="GO" id="GO:0008710">
    <property type="term" value="F:8-amino-7-oxononanoate synthase activity"/>
    <property type="evidence" value="ECO:0007669"/>
    <property type="project" value="UniProtKB-UniRule"/>
</dbReference>
<dbReference type="GO" id="GO:0030170">
    <property type="term" value="F:pyridoxal phosphate binding"/>
    <property type="evidence" value="ECO:0007669"/>
    <property type="project" value="UniProtKB-UniRule"/>
</dbReference>
<dbReference type="GO" id="GO:0009102">
    <property type="term" value="P:biotin biosynthetic process"/>
    <property type="evidence" value="ECO:0007669"/>
    <property type="project" value="UniProtKB-UniRule"/>
</dbReference>
<dbReference type="CDD" id="cd06454">
    <property type="entry name" value="KBL_like"/>
    <property type="match status" value="1"/>
</dbReference>
<dbReference type="FunFam" id="3.40.640.10:FF:000095">
    <property type="entry name" value="8-amino-7-oxononanoate synthase"/>
    <property type="match status" value="1"/>
</dbReference>
<dbReference type="FunFam" id="3.90.1150.10:FF:000036">
    <property type="entry name" value="8-amino-7-oxononanoate synthase"/>
    <property type="match status" value="1"/>
</dbReference>
<dbReference type="Gene3D" id="3.90.1150.10">
    <property type="entry name" value="Aspartate Aminotransferase, domain 1"/>
    <property type="match status" value="1"/>
</dbReference>
<dbReference type="Gene3D" id="3.40.640.10">
    <property type="entry name" value="Type I PLP-dependent aspartate aminotransferase-like (Major domain)"/>
    <property type="match status" value="1"/>
</dbReference>
<dbReference type="HAMAP" id="MF_01693">
    <property type="entry name" value="BioF_aminotrans_2"/>
    <property type="match status" value="1"/>
</dbReference>
<dbReference type="InterPro" id="IPR001917">
    <property type="entry name" value="Aminotrans_II_pyridoxalP_BS"/>
</dbReference>
<dbReference type="InterPro" id="IPR004839">
    <property type="entry name" value="Aminotransferase_I/II_large"/>
</dbReference>
<dbReference type="InterPro" id="IPR050087">
    <property type="entry name" value="AON_synthase_class-II"/>
</dbReference>
<dbReference type="InterPro" id="IPR004723">
    <property type="entry name" value="AONS_Archaea/Proteobacteria"/>
</dbReference>
<dbReference type="InterPro" id="IPR022834">
    <property type="entry name" value="AONS_Proteobacteria"/>
</dbReference>
<dbReference type="InterPro" id="IPR015424">
    <property type="entry name" value="PyrdxlP-dep_Trfase"/>
</dbReference>
<dbReference type="InterPro" id="IPR015421">
    <property type="entry name" value="PyrdxlP-dep_Trfase_major"/>
</dbReference>
<dbReference type="InterPro" id="IPR015422">
    <property type="entry name" value="PyrdxlP-dep_Trfase_small"/>
</dbReference>
<dbReference type="NCBIfam" id="TIGR00858">
    <property type="entry name" value="bioF"/>
    <property type="match status" value="1"/>
</dbReference>
<dbReference type="PANTHER" id="PTHR13693:SF100">
    <property type="entry name" value="8-AMINO-7-OXONONANOATE SYNTHASE"/>
    <property type="match status" value="1"/>
</dbReference>
<dbReference type="PANTHER" id="PTHR13693">
    <property type="entry name" value="CLASS II AMINOTRANSFERASE/8-AMINO-7-OXONONANOATE SYNTHASE"/>
    <property type="match status" value="1"/>
</dbReference>
<dbReference type="Pfam" id="PF00155">
    <property type="entry name" value="Aminotran_1_2"/>
    <property type="match status" value="1"/>
</dbReference>
<dbReference type="SUPFAM" id="SSF53383">
    <property type="entry name" value="PLP-dependent transferases"/>
    <property type="match status" value="1"/>
</dbReference>
<dbReference type="PROSITE" id="PS00599">
    <property type="entry name" value="AA_TRANSFER_CLASS_2"/>
    <property type="match status" value="1"/>
</dbReference>
<proteinExistence type="inferred from homology"/>
<protein>
    <recommendedName>
        <fullName evidence="1">8-amino-7-oxononanoate synthase</fullName>
        <shortName evidence="1">AONS</shortName>
        <ecNumber evidence="1">2.3.1.47</ecNumber>
    </recommendedName>
    <alternativeName>
        <fullName evidence="1">7-keto-8-amino-pelargonic acid synthase</fullName>
        <shortName evidence="1">7-KAP synthase</shortName>
        <shortName evidence="1">KAPA synthase</shortName>
    </alternativeName>
    <alternativeName>
        <fullName evidence="1">8-amino-7-ketopelargonate synthase</fullName>
    </alternativeName>
</protein>
<organism>
    <name type="scientific">Escherichia coli O8 (strain IAI1)</name>
    <dbReference type="NCBI Taxonomy" id="585034"/>
    <lineage>
        <taxon>Bacteria</taxon>
        <taxon>Pseudomonadati</taxon>
        <taxon>Pseudomonadota</taxon>
        <taxon>Gammaproteobacteria</taxon>
        <taxon>Enterobacterales</taxon>
        <taxon>Enterobacteriaceae</taxon>
        <taxon>Escherichia</taxon>
    </lineage>
</organism>
<accession>B7M748</accession>
<feature type="chain" id="PRO_0000380975" description="8-amino-7-oxononanoate synthase">
    <location>
        <begin position="1"/>
        <end position="384"/>
    </location>
</feature>
<feature type="binding site" evidence="1">
    <location>
        <position position="21"/>
    </location>
    <ligand>
        <name>substrate</name>
    </ligand>
</feature>
<feature type="binding site" evidence="1">
    <location>
        <begin position="108"/>
        <end position="109"/>
    </location>
    <ligand>
        <name>pyridoxal 5'-phosphate</name>
        <dbReference type="ChEBI" id="CHEBI:597326"/>
    </ligand>
</feature>
<feature type="binding site" evidence="1">
    <location>
        <position position="133"/>
    </location>
    <ligand>
        <name>substrate</name>
    </ligand>
</feature>
<feature type="binding site" evidence="1">
    <location>
        <position position="179"/>
    </location>
    <ligand>
        <name>pyridoxal 5'-phosphate</name>
        <dbReference type="ChEBI" id="CHEBI:597326"/>
    </ligand>
</feature>
<feature type="binding site" evidence="1">
    <location>
        <position position="207"/>
    </location>
    <ligand>
        <name>pyridoxal 5'-phosphate</name>
        <dbReference type="ChEBI" id="CHEBI:597326"/>
    </ligand>
</feature>
<feature type="binding site" evidence="1">
    <location>
        <position position="233"/>
    </location>
    <ligand>
        <name>pyridoxal 5'-phosphate</name>
        <dbReference type="ChEBI" id="CHEBI:597326"/>
    </ligand>
</feature>
<feature type="binding site" evidence="1">
    <location>
        <position position="352"/>
    </location>
    <ligand>
        <name>substrate</name>
    </ligand>
</feature>
<feature type="modified residue" description="N6-(pyridoxal phosphate)lysine" evidence="1">
    <location>
        <position position="236"/>
    </location>
</feature>
<reference key="1">
    <citation type="journal article" date="2009" name="PLoS Genet.">
        <title>Organised genome dynamics in the Escherichia coli species results in highly diverse adaptive paths.</title>
        <authorList>
            <person name="Touchon M."/>
            <person name="Hoede C."/>
            <person name="Tenaillon O."/>
            <person name="Barbe V."/>
            <person name="Baeriswyl S."/>
            <person name="Bidet P."/>
            <person name="Bingen E."/>
            <person name="Bonacorsi S."/>
            <person name="Bouchier C."/>
            <person name="Bouvet O."/>
            <person name="Calteau A."/>
            <person name="Chiapello H."/>
            <person name="Clermont O."/>
            <person name="Cruveiller S."/>
            <person name="Danchin A."/>
            <person name="Diard M."/>
            <person name="Dossat C."/>
            <person name="Karoui M.E."/>
            <person name="Frapy E."/>
            <person name="Garry L."/>
            <person name="Ghigo J.M."/>
            <person name="Gilles A.M."/>
            <person name="Johnson J."/>
            <person name="Le Bouguenec C."/>
            <person name="Lescat M."/>
            <person name="Mangenot S."/>
            <person name="Martinez-Jehanne V."/>
            <person name="Matic I."/>
            <person name="Nassif X."/>
            <person name="Oztas S."/>
            <person name="Petit M.A."/>
            <person name="Pichon C."/>
            <person name="Rouy Z."/>
            <person name="Ruf C.S."/>
            <person name="Schneider D."/>
            <person name="Tourret J."/>
            <person name="Vacherie B."/>
            <person name="Vallenet D."/>
            <person name="Medigue C."/>
            <person name="Rocha E.P.C."/>
            <person name="Denamur E."/>
        </authorList>
    </citation>
    <scope>NUCLEOTIDE SEQUENCE [LARGE SCALE GENOMIC DNA]</scope>
    <source>
        <strain>IAI1</strain>
    </source>
</reference>
<sequence>MSWQEKINAALDARRAADALRRRYPVAQGAGRWLVADDRQYLNFSSNDYLGLSHHPQIIRAWQQGAEQFGVGSGGSGHVSGYSVAHQALEEELAEWLGYSRALLFISGFAANQAVIAAMMAKEDRIAADRLSHASLLEAASLSPSQLRRFAHNDVTHLARLLASPCPGQQMVVTEGVFSMDGDSAPLAEIQQVTQQHNGWLMVDDAHGTGVIGEQGRGSCWLQKVKPELLVVTFGKGFGVSGAAVLCSSTVADYLLQFARHLIYSTSMPPAQAQALRASLAVIRSEEGDARREKLAALITRFRAGVQGSPFTLADSRSAIQPLIVGDNSRALQLAEKLRQQGCWVTAIRPPTVPAGTARLRLTLTAAHEMQDIDRLLEMLHGNG</sequence>
<name>BIOF_ECO8A</name>
<comment type="function">
    <text evidence="1">Catalyzes the decarboxylative condensation of pimeloyl-[acyl-carrier protein] and L-alanine to produce 8-amino-7-oxononanoate (AON), [acyl-carrier protein], and carbon dioxide.</text>
</comment>
<comment type="catalytic activity">
    <reaction evidence="1">
        <text>6-carboxyhexanoyl-[ACP] + L-alanine + H(+) = (8S)-8-amino-7-oxononanoate + holo-[ACP] + CO2</text>
        <dbReference type="Rhea" id="RHEA:42288"/>
        <dbReference type="Rhea" id="RHEA-COMP:9685"/>
        <dbReference type="Rhea" id="RHEA-COMP:9955"/>
        <dbReference type="ChEBI" id="CHEBI:15378"/>
        <dbReference type="ChEBI" id="CHEBI:16526"/>
        <dbReference type="ChEBI" id="CHEBI:57972"/>
        <dbReference type="ChEBI" id="CHEBI:64479"/>
        <dbReference type="ChEBI" id="CHEBI:78846"/>
        <dbReference type="ChEBI" id="CHEBI:149468"/>
        <dbReference type="EC" id="2.3.1.47"/>
    </reaction>
</comment>
<comment type="cofactor">
    <cofactor evidence="1">
        <name>pyridoxal 5'-phosphate</name>
        <dbReference type="ChEBI" id="CHEBI:597326"/>
    </cofactor>
</comment>
<comment type="pathway">
    <text evidence="1">Cofactor biosynthesis; biotin biosynthesis.</text>
</comment>
<comment type="subunit">
    <text evidence="1">Homodimer.</text>
</comment>
<comment type="similarity">
    <text evidence="1">Belongs to the class-II pyridoxal-phosphate-dependent aminotransferase family. BioF subfamily.</text>
</comment>